<comment type="function">
    <text evidence="1">Probable adenosyl-L-methionine (AdoMet)-dependent tRNA (uracil-O(2)-)-methyltransferase.</text>
</comment>
<comment type="catalytic activity">
    <reaction>
        <text>uridine(44) in tRNA(Ser) + S-adenosyl-L-methionine = 2'-O-methyluridine(44) in tRNA(Ser) + S-adenosyl-L-homocysteine + H(+)</text>
        <dbReference type="Rhea" id="RHEA:43100"/>
        <dbReference type="Rhea" id="RHEA-COMP:10339"/>
        <dbReference type="Rhea" id="RHEA-COMP:10340"/>
        <dbReference type="ChEBI" id="CHEBI:15378"/>
        <dbReference type="ChEBI" id="CHEBI:57856"/>
        <dbReference type="ChEBI" id="CHEBI:59789"/>
        <dbReference type="ChEBI" id="CHEBI:65315"/>
        <dbReference type="ChEBI" id="CHEBI:74478"/>
        <dbReference type="EC" id="2.1.1.211"/>
    </reaction>
</comment>
<comment type="subcellular location">
    <subcellularLocation>
        <location evidence="1">Cytoplasm</location>
    </subcellularLocation>
</comment>
<comment type="similarity">
    <text evidence="2">Belongs to the TRM44 family.</text>
</comment>
<comment type="sequence caution" evidence="2">
    <conflict type="erroneous gene model prediction">
        <sequence resource="EMBL-CDS" id="CAE76371"/>
    </conflict>
</comment>
<proteinExistence type="inferred from homology"/>
<protein>
    <recommendedName>
        <fullName>tRNA (uracil-O(2)-)-methyltransferase</fullName>
        <ecNumber>2.1.1.211</ecNumber>
    </recommendedName>
    <alternativeName>
        <fullName>tRNA(M-2-U44)-methyltransferase</fullName>
    </alternativeName>
</protein>
<dbReference type="EC" id="2.1.1.211"/>
<dbReference type="EMBL" id="BX842630">
    <property type="protein sequence ID" value="CAE76371.1"/>
    <property type="status" value="ALT_SEQ"/>
    <property type="molecule type" value="Genomic_DNA"/>
</dbReference>
<dbReference type="EMBL" id="CM002236">
    <property type="protein sequence ID" value="EAA35108.3"/>
    <property type="molecule type" value="Genomic_DNA"/>
</dbReference>
<dbReference type="RefSeq" id="XP_964344.3">
    <property type="nucleotide sequence ID" value="XM_959251.3"/>
</dbReference>
<dbReference type="FunCoup" id="Q7SE80">
    <property type="interactions" value="82"/>
</dbReference>
<dbReference type="STRING" id="367110.Q7SE80"/>
<dbReference type="PaxDb" id="5141-EFNCRP00000001098"/>
<dbReference type="EnsemblFungi" id="EAA35108">
    <property type="protein sequence ID" value="EAA35108"/>
    <property type="gene ID" value="NCU01980"/>
</dbReference>
<dbReference type="GeneID" id="3880484"/>
<dbReference type="KEGG" id="ncr:NCU01980"/>
<dbReference type="VEuPathDB" id="FungiDB:NCU01980"/>
<dbReference type="HOGENOM" id="CLU_018580_2_1_1"/>
<dbReference type="InParanoid" id="Q7SE80"/>
<dbReference type="OrthoDB" id="10047021at2759"/>
<dbReference type="Proteomes" id="UP000001805">
    <property type="component" value="Chromosome 1, Linkage Group I"/>
</dbReference>
<dbReference type="GO" id="GO:0005737">
    <property type="term" value="C:cytoplasm"/>
    <property type="evidence" value="ECO:0007669"/>
    <property type="project" value="UniProtKB-SubCell"/>
</dbReference>
<dbReference type="GO" id="GO:0016300">
    <property type="term" value="F:tRNA (uridine) methyltransferase activity"/>
    <property type="evidence" value="ECO:0000318"/>
    <property type="project" value="GO_Central"/>
</dbReference>
<dbReference type="GO" id="GO:0141101">
    <property type="term" value="F:tRNA(Ser) (uridine(44)-2'-O-)-methyltransferase activity"/>
    <property type="evidence" value="ECO:0007669"/>
    <property type="project" value="UniProtKB-EC"/>
</dbReference>
<dbReference type="GO" id="GO:0030488">
    <property type="term" value="P:tRNA methylation"/>
    <property type="evidence" value="ECO:0000318"/>
    <property type="project" value="GO_Central"/>
</dbReference>
<dbReference type="GO" id="GO:0002128">
    <property type="term" value="P:tRNA nucleoside ribose methylation"/>
    <property type="evidence" value="ECO:0007669"/>
    <property type="project" value="EnsemblFungi"/>
</dbReference>
<dbReference type="InterPro" id="IPR011671">
    <property type="entry name" value="tRNA_uracil_MeTrfase"/>
</dbReference>
<dbReference type="PANTHER" id="PTHR21210">
    <property type="entry name" value="TRNA (URACIL-O(2)-)-METHYLTRANSFERASE-RELATED"/>
    <property type="match status" value="1"/>
</dbReference>
<dbReference type="PANTHER" id="PTHR21210:SF0">
    <property type="entry name" value="TRNA (URACIL-O(2)-)-METHYLTRANSFERASE-RELATED"/>
    <property type="match status" value="1"/>
</dbReference>
<dbReference type="Pfam" id="PF07757">
    <property type="entry name" value="AdoMet_MTase"/>
    <property type="match status" value="1"/>
</dbReference>
<reference key="1">
    <citation type="journal article" date="2003" name="Nucleic Acids Res.">
        <title>What's in the genome of a filamentous fungus? Analysis of the Neurospora genome sequence.</title>
        <authorList>
            <person name="Mannhaupt G."/>
            <person name="Montrone C."/>
            <person name="Haase D."/>
            <person name="Mewes H.-W."/>
            <person name="Aign V."/>
            <person name="Hoheisel J.D."/>
            <person name="Fartmann B."/>
            <person name="Nyakatura G."/>
            <person name="Kempken F."/>
            <person name="Maier J."/>
            <person name="Schulte U."/>
        </authorList>
    </citation>
    <scope>NUCLEOTIDE SEQUENCE [LARGE SCALE GENOMIC DNA]</scope>
    <source>
        <strain>ATCC 24698 / 74-OR23-1A / CBS 708.71 / DSM 1257 / FGSC 987</strain>
    </source>
</reference>
<reference key="2">
    <citation type="journal article" date="2003" name="Nature">
        <title>The genome sequence of the filamentous fungus Neurospora crassa.</title>
        <authorList>
            <person name="Galagan J.E."/>
            <person name="Calvo S.E."/>
            <person name="Borkovich K.A."/>
            <person name="Selker E.U."/>
            <person name="Read N.D."/>
            <person name="Jaffe D.B."/>
            <person name="FitzHugh W."/>
            <person name="Ma L.-J."/>
            <person name="Smirnov S."/>
            <person name="Purcell S."/>
            <person name="Rehman B."/>
            <person name="Elkins T."/>
            <person name="Engels R."/>
            <person name="Wang S."/>
            <person name="Nielsen C.B."/>
            <person name="Butler J."/>
            <person name="Endrizzi M."/>
            <person name="Qui D."/>
            <person name="Ianakiev P."/>
            <person name="Bell-Pedersen D."/>
            <person name="Nelson M.A."/>
            <person name="Werner-Washburne M."/>
            <person name="Selitrennikoff C.P."/>
            <person name="Kinsey J.A."/>
            <person name="Braun E.L."/>
            <person name="Zelter A."/>
            <person name="Schulte U."/>
            <person name="Kothe G.O."/>
            <person name="Jedd G."/>
            <person name="Mewes H.-W."/>
            <person name="Staben C."/>
            <person name="Marcotte E."/>
            <person name="Greenberg D."/>
            <person name="Roy A."/>
            <person name="Foley K."/>
            <person name="Naylor J."/>
            <person name="Stange-Thomann N."/>
            <person name="Barrett R."/>
            <person name="Gnerre S."/>
            <person name="Kamal M."/>
            <person name="Kamvysselis M."/>
            <person name="Mauceli E.W."/>
            <person name="Bielke C."/>
            <person name="Rudd S."/>
            <person name="Frishman D."/>
            <person name="Krystofova S."/>
            <person name="Rasmussen C."/>
            <person name="Metzenberg R.L."/>
            <person name="Perkins D.D."/>
            <person name="Kroken S."/>
            <person name="Cogoni C."/>
            <person name="Macino G."/>
            <person name="Catcheside D.E.A."/>
            <person name="Li W."/>
            <person name="Pratt R.J."/>
            <person name="Osmani S.A."/>
            <person name="DeSouza C.P.C."/>
            <person name="Glass N.L."/>
            <person name="Orbach M.J."/>
            <person name="Berglund J.A."/>
            <person name="Voelker R."/>
            <person name="Yarden O."/>
            <person name="Plamann M."/>
            <person name="Seiler S."/>
            <person name="Dunlap J.C."/>
            <person name="Radford A."/>
            <person name="Aramayo R."/>
            <person name="Natvig D.O."/>
            <person name="Alex L.A."/>
            <person name="Mannhaupt G."/>
            <person name="Ebbole D.J."/>
            <person name="Freitag M."/>
            <person name="Paulsen I."/>
            <person name="Sachs M.S."/>
            <person name="Lander E.S."/>
            <person name="Nusbaum C."/>
            <person name="Birren B.W."/>
        </authorList>
    </citation>
    <scope>NUCLEOTIDE SEQUENCE [LARGE SCALE GENOMIC DNA]</scope>
    <source>
        <strain>ATCC 24698 / 74-OR23-1A / CBS 708.71 / DSM 1257 / FGSC 987</strain>
    </source>
</reference>
<gene>
    <name type="primary">trm44</name>
    <name type="ORF">B13D15.160</name>
    <name type="ORF">NCU01980</name>
</gene>
<sequence>MPKFTPEELAVNAVPVIRQATSGDAEPDWRPLFRHECTFNPVIFQDVMLNLIKNPNINSSWLFRADILYDTEKNIQNGLETPLSELGDVPDIPSFDGFGLHRRLIRRLIPRSTMRDKPMDQTCLIYQSKGSDSEGGLQRHLVIYLPHVSTEAEMPYYHPTVRGIAFHHEWSPTETRGSVSVSYLYFEGGERPEKLTRIASHLLQAVYKHGQGRADGYQKRVHHDLLVPQDRVQNTYTALKQKYARALIESWVESTDPTKHVFEDLCIAAFLIELWTDIYGRNFFPGFVDIGCGNGLLVHILNLEGFKGWGFDARSRKSWATYSTRLETPTGVQESLQQLVLLPPPVSRAGISEISSEGFREELVHDGRFPKGTFIISNHADELTPWTPILAAISDCPFIMIPCCSHDLTGARFRAPAPKDKKKANSAYSSLVSWVTQITADCGWVAEQEMLRIPSTRNTAIVGRKRQGDVSAIDIGVIVDRYGGTAGYLETVVKLVKSTNLDEKH</sequence>
<keyword id="KW-0963">Cytoplasm</keyword>
<keyword id="KW-0489">Methyltransferase</keyword>
<keyword id="KW-1185">Reference proteome</keyword>
<keyword id="KW-0949">S-adenosyl-L-methionine</keyword>
<keyword id="KW-0808">Transferase</keyword>
<keyword id="KW-0819">tRNA processing</keyword>
<feature type="chain" id="PRO_0000249908" description="tRNA (uracil-O(2)-)-methyltransferase">
    <location>
        <begin position="1"/>
        <end position="505"/>
    </location>
</feature>
<name>TRM44_NEUCR</name>
<accession>Q7SE80</accession>
<accession>Q6MVC8</accession>
<organism>
    <name type="scientific">Neurospora crassa (strain ATCC 24698 / 74-OR23-1A / CBS 708.71 / DSM 1257 / FGSC 987)</name>
    <dbReference type="NCBI Taxonomy" id="367110"/>
    <lineage>
        <taxon>Eukaryota</taxon>
        <taxon>Fungi</taxon>
        <taxon>Dikarya</taxon>
        <taxon>Ascomycota</taxon>
        <taxon>Pezizomycotina</taxon>
        <taxon>Sordariomycetes</taxon>
        <taxon>Sordariomycetidae</taxon>
        <taxon>Sordariales</taxon>
        <taxon>Sordariaceae</taxon>
        <taxon>Neurospora</taxon>
    </lineage>
</organism>
<evidence type="ECO:0000250" key="1"/>
<evidence type="ECO:0000305" key="2"/>